<dbReference type="EC" id="2.4.1.227" evidence="1"/>
<dbReference type="EMBL" id="CP000481">
    <property type="protein sequence ID" value="ABK52783.1"/>
    <property type="molecule type" value="Genomic_DNA"/>
</dbReference>
<dbReference type="RefSeq" id="WP_011719846.1">
    <property type="nucleotide sequence ID" value="NC_008578.1"/>
</dbReference>
<dbReference type="SMR" id="A0LTM3"/>
<dbReference type="FunCoup" id="A0LTM3">
    <property type="interactions" value="73"/>
</dbReference>
<dbReference type="STRING" id="351607.Acel_1010"/>
<dbReference type="CAZy" id="GT28">
    <property type="family name" value="Glycosyltransferase Family 28"/>
</dbReference>
<dbReference type="KEGG" id="ace:Acel_1010"/>
<dbReference type="eggNOG" id="COG0707">
    <property type="taxonomic scope" value="Bacteria"/>
</dbReference>
<dbReference type="HOGENOM" id="CLU_037404_1_0_11"/>
<dbReference type="InParanoid" id="A0LTM3"/>
<dbReference type="OrthoDB" id="9808936at2"/>
<dbReference type="UniPathway" id="UPA00219"/>
<dbReference type="Proteomes" id="UP000008221">
    <property type="component" value="Chromosome"/>
</dbReference>
<dbReference type="GO" id="GO:0005886">
    <property type="term" value="C:plasma membrane"/>
    <property type="evidence" value="ECO:0007669"/>
    <property type="project" value="UniProtKB-SubCell"/>
</dbReference>
<dbReference type="GO" id="GO:0051991">
    <property type="term" value="F:UDP-N-acetyl-D-glucosamine:N-acetylmuramoyl-L-alanyl-D-glutamyl-meso-2,6-diaminopimelyl-D-alanyl-D-alanine-diphosphoundecaprenol 4-beta-N-acetylglucosaminlytransferase activity"/>
    <property type="evidence" value="ECO:0007669"/>
    <property type="project" value="RHEA"/>
</dbReference>
<dbReference type="GO" id="GO:0050511">
    <property type="term" value="F:undecaprenyldiphospho-muramoylpentapeptide beta-N-acetylglucosaminyltransferase activity"/>
    <property type="evidence" value="ECO:0007669"/>
    <property type="project" value="UniProtKB-UniRule"/>
</dbReference>
<dbReference type="GO" id="GO:0005975">
    <property type="term" value="P:carbohydrate metabolic process"/>
    <property type="evidence" value="ECO:0007669"/>
    <property type="project" value="InterPro"/>
</dbReference>
<dbReference type="GO" id="GO:0051301">
    <property type="term" value="P:cell division"/>
    <property type="evidence" value="ECO:0007669"/>
    <property type="project" value="UniProtKB-KW"/>
</dbReference>
<dbReference type="GO" id="GO:0071555">
    <property type="term" value="P:cell wall organization"/>
    <property type="evidence" value="ECO:0007669"/>
    <property type="project" value="UniProtKB-KW"/>
</dbReference>
<dbReference type="GO" id="GO:0030259">
    <property type="term" value="P:lipid glycosylation"/>
    <property type="evidence" value="ECO:0007669"/>
    <property type="project" value="UniProtKB-UniRule"/>
</dbReference>
<dbReference type="GO" id="GO:0009252">
    <property type="term" value="P:peptidoglycan biosynthetic process"/>
    <property type="evidence" value="ECO:0007669"/>
    <property type="project" value="UniProtKB-UniRule"/>
</dbReference>
<dbReference type="GO" id="GO:0008360">
    <property type="term" value="P:regulation of cell shape"/>
    <property type="evidence" value="ECO:0007669"/>
    <property type="project" value="UniProtKB-KW"/>
</dbReference>
<dbReference type="CDD" id="cd03785">
    <property type="entry name" value="GT28_MurG"/>
    <property type="match status" value="1"/>
</dbReference>
<dbReference type="Gene3D" id="3.40.50.2000">
    <property type="entry name" value="Glycogen Phosphorylase B"/>
    <property type="match status" value="2"/>
</dbReference>
<dbReference type="HAMAP" id="MF_00033">
    <property type="entry name" value="MurG"/>
    <property type="match status" value="1"/>
</dbReference>
<dbReference type="InterPro" id="IPR006009">
    <property type="entry name" value="GlcNAc_MurG"/>
</dbReference>
<dbReference type="InterPro" id="IPR007235">
    <property type="entry name" value="Glyco_trans_28_C"/>
</dbReference>
<dbReference type="InterPro" id="IPR004276">
    <property type="entry name" value="GlycoTrans_28_N"/>
</dbReference>
<dbReference type="NCBIfam" id="TIGR01133">
    <property type="entry name" value="murG"/>
    <property type="match status" value="1"/>
</dbReference>
<dbReference type="PANTHER" id="PTHR21015:SF22">
    <property type="entry name" value="GLYCOSYLTRANSFERASE"/>
    <property type="match status" value="1"/>
</dbReference>
<dbReference type="PANTHER" id="PTHR21015">
    <property type="entry name" value="UDP-N-ACETYLGLUCOSAMINE--N-ACETYLMURAMYL-(PENTAPEPTIDE) PYROPHOSPHORYL-UNDECAPRENOL N-ACETYLGLUCOSAMINE TRANSFERASE 1"/>
    <property type="match status" value="1"/>
</dbReference>
<dbReference type="Pfam" id="PF04101">
    <property type="entry name" value="Glyco_tran_28_C"/>
    <property type="match status" value="1"/>
</dbReference>
<dbReference type="Pfam" id="PF03033">
    <property type="entry name" value="Glyco_transf_28"/>
    <property type="match status" value="1"/>
</dbReference>
<dbReference type="SUPFAM" id="SSF53756">
    <property type="entry name" value="UDP-Glycosyltransferase/glycogen phosphorylase"/>
    <property type="match status" value="1"/>
</dbReference>
<reference key="1">
    <citation type="journal article" date="2009" name="Genome Res.">
        <title>Complete genome of the cellulolytic thermophile Acidothermus cellulolyticus 11B provides insights into its ecophysiological and evolutionary adaptations.</title>
        <authorList>
            <person name="Barabote R.D."/>
            <person name="Xie G."/>
            <person name="Leu D.H."/>
            <person name="Normand P."/>
            <person name="Necsulea A."/>
            <person name="Daubin V."/>
            <person name="Medigue C."/>
            <person name="Adney W.S."/>
            <person name="Xu X.C."/>
            <person name="Lapidus A."/>
            <person name="Parales R.E."/>
            <person name="Detter C."/>
            <person name="Pujic P."/>
            <person name="Bruce D."/>
            <person name="Lavire C."/>
            <person name="Challacombe J.F."/>
            <person name="Brettin T.S."/>
            <person name="Berry A.M."/>
        </authorList>
    </citation>
    <scope>NUCLEOTIDE SEQUENCE [LARGE SCALE GENOMIC DNA]</scope>
    <source>
        <strain>ATCC 43068 / DSM 8971 / 11B</strain>
    </source>
</reference>
<keyword id="KW-0131">Cell cycle</keyword>
<keyword id="KW-0132">Cell division</keyword>
<keyword id="KW-1003">Cell membrane</keyword>
<keyword id="KW-0133">Cell shape</keyword>
<keyword id="KW-0961">Cell wall biogenesis/degradation</keyword>
<keyword id="KW-0328">Glycosyltransferase</keyword>
<keyword id="KW-0472">Membrane</keyword>
<keyword id="KW-0573">Peptidoglycan synthesis</keyword>
<keyword id="KW-1185">Reference proteome</keyword>
<keyword id="KW-0808">Transferase</keyword>
<evidence type="ECO:0000255" key="1">
    <source>
        <dbReference type="HAMAP-Rule" id="MF_00033"/>
    </source>
</evidence>
<accession>A0LTM3</accession>
<name>MURG_ACIC1</name>
<gene>
    <name evidence="1" type="primary">murG</name>
    <name type="ordered locus">Acel_1010</name>
</gene>
<feature type="chain" id="PRO_1000002608" description="UDP-N-acetylglucosamine--N-acetylmuramyl-(pentapeptide) pyrophosphoryl-undecaprenol N-acetylglucosamine transferase">
    <location>
        <begin position="1"/>
        <end position="369"/>
    </location>
</feature>
<feature type="binding site" evidence="1">
    <location>
        <begin position="10"/>
        <end position="12"/>
    </location>
    <ligand>
        <name>UDP-N-acetyl-alpha-D-glucosamine</name>
        <dbReference type="ChEBI" id="CHEBI:57705"/>
    </ligand>
</feature>
<feature type="binding site" evidence="1">
    <location>
        <position position="124"/>
    </location>
    <ligand>
        <name>UDP-N-acetyl-alpha-D-glucosamine</name>
        <dbReference type="ChEBI" id="CHEBI:57705"/>
    </ligand>
</feature>
<feature type="binding site" evidence="1">
    <location>
        <position position="161"/>
    </location>
    <ligand>
        <name>UDP-N-acetyl-alpha-D-glucosamine</name>
        <dbReference type="ChEBI" id="CHEBI:57705"/>
    </ligand>
</feature>
<feature type="binding site" evidence="1">
    <location>
        <position position="195"/>
    </location>
    <ligand>
        <name>UDP-N-acetyl-alpha-D-glucosamine</name>
        <dbReference type="ChEBI" id="CHEBI:57705"/>
    </ligand>
</feature>
<feature type="binding site" evidence="1">
    <location>
        <position position="295"/>
    </location>
    <ligand>
        <name>UDP-N-acetyl-alpha-D-glucosamine</name>
        <dbReference type="ChEBI" id="CHEBI:57705"/>
    </ligand>
</feature>
<protein>
    <recommendedName>
        <fullName evidence="1">UDP-N-acetylglucosamine--N-acetylmuramyl-(pentapeptide) pyrophosphoryl-undecaprenol N-acetylglucosamine transferase</fullName>
        <ecNumber evidence="1">2.4.1.227</ecNumber>
    </recommendedName>
    <alternativeName>
        <fullName evidence="1">Undecaprenyl-PP-MurNAc-pentapeptide-UDPGlcNAc GlcNAc transferase</fullName>
    </alternativeName>
</protein>
<sequence length="369" mass="38657">MHVVLAGGGTAGHIEPALTLAEALRRRDVGVGITLLGSPRGLETRLVPARGFDLALIPAVPLPRRLTPDLLAVPSRLRAAVGEVERILAETGADVLVGFGGYVALPGYLAARRTGLPYVVHEANARPGLANRWGARFTRYVAVADAAIRLPHAVPLGIPLRREIATLDRAARRAEARAYFGLDAEAPTLAVAGGSQGARSINRAVVAALPMLAAAGVQVLHIAGPQQIAEVESAQPKRAPDAPAYVLLPYADRMDLVYAAADLMLCRAGALTCAELAAVGLPAVYVPLPHGNGEQRLNAKPIVEAGGGVLLRDAELRGDAIRRIVLPLVTDRARLAEMAGRAAALGRRDADERLADLVEQAAAARRVVT</sequence>
<proteinExistence type="inferred from homology"/>
<comment type="function">
    <text evidence="1">Cell wall formation. Catalyzes the transfer of a GlcNAc subunit on undecaprenyl-pyrophosphoryl-MurNAc-pentapeptide (lipid intermediate I) to form undecaprenyl-pyrophosphoryl-MurNAc-(pentapeptide)GlcNAc (lipid intermediate II).</text>
</comment>
<comment type="catalytic activity">
    <reaction evidence="1">
        <text>di-trans,octa-cis-undecaprenyl diphospho-N-acetyl-alpha-D-muramoyl-L-alanyl-D-glutamyl-meso-2,6-diaminopimeloyl-D-alanyl-D-alanine + UDP-N-acetyl-alpha-D-glucosamine = di-trans,octa-cis-undecaprenyl diphospho-[N-acetyl-alpha-D-glucosaminyl-(1-&gt;4)]-N-acetyl-alpha-D-muramoyl-L-alanyl-D-glutamyl-meso-2,6-diaminopimeloyl-D-alanyl-D-alanine + UDP + H(+)</text>
        <dbReference type="Rhea" id="RHEA:31227"/>
        <dbReference type="ChEBI" id="CHEBI:15378"/>
        <dbReference type="ChEBI" id="CHEBI:57705"/>
        <dbReference type="ChEBI" id="CHEBI:58223"/>
        <dbReference type="ChEBI" id="CHEBI:61387"/>
        <dbReference type="ChEBI" id="CHEBI:61388"/>
        <dbReference type="EC" id="2.4.1.227"/>
    </reaction>
</comment>
<comment type="pathway">
    <text evidence="1">Cell wall biogenesis; peptidoglycan biosynthesis.</text>
</comment>
<comment type="subcellular location">
    <subcellularLocation>
        <location evidence="1">Cell membrane</location>
        <topology evidence="1">Peripheral membrane protein</topology>
        <orientation evidence="1">Cytoplasmic side</orientation>
    </subcellularLocation>
</comment>
<comment type="similarity">
    <text evidence="1">Belongs to the glycosyltransferase 28 family. MurG subfamily.</text>
</comment>
<organism>
    <name type="scientific">Acidothermus cellulolyticus (strain ATCC 43068 / DSM 8971 / 11B)</name>
    <dbReference type="NCBI Taxonomy" id="351607"/>
    <lineage>
        <taxon>Bacteria</taxon>
        <taxon>Bacillati</taxon>
        <taxon>Actinomycetota</taxon>
        <taxon>Actinomycetes</taxon>
        <taxon>Acidothermales</taxon>
        <taxon>Acidothermaceae</taxon>
        <taxon>Acidothermus</taxon>
    </lineage>
</organism>